<organism>
    <name type="scientific">Dictyostelium discoideum</name>
    <name type="common">Social amoeba</name>
    <dbReference type="NCBI Taxonomy" id="44689"/>
    <lineage>
        <taxon>Eukaryota</taxon>
        <taxon>Amoebozoa</taxon>
        <taxon>Evosea</taxon>
        <taxon>Eumycetozoa</taxon>
        <taxon>Dictyostelia</taxon>
        <taxon>Dictyosteliales</taxon>
        <taxon>Dictyosteliaceae</taxon>
        <taxon>Dictyostelium</taxon>
    </lineage>
</organism>
<accession>Q54NK2</accession>
<name>Y6387_DICDI</name>
<proteinExistence type="predicted"/>
<evidence type="ECO:0000256" key="1">
    <source>
        <dbReference type="SAM" id="MobiDB-lite"/>
    </source>
</evidence>
<gene>
    <name type="ORF">DDB_G0285187</name>
</gene>
<feature type="chain" id="PRO_0000350797" description="Putative uncharacterized protein DDB_G0285187">
    <location>
        <begin position="1"/>
        <end position="46"/>
    </location>
</feature>
<feature type="region of interest" description="Disordered" evidence="1">
    <location>
        <begin position="1"/>
        <end position="46"/>
    </location>
</feature>
<feature type="compositionally biased region" description="Polar residues" evidence="1">
    <location>
        <begin position="25"/>
        <end position="40"/>
    </location>
</feature>
<keyword id="KW-1185">Reference proteome</keyword>
<reference key="1">
    <citation type="journal article" date="2005" name="Nature">
        <title>The genome of the social amoeba Dictyostelium discoideum.</title>
        <authorList>
            <person name="Eichinger L."/>
            <person name="Pachebat J.A."/>
            <person name="Gloeckner G."/>
            <person name="Rajandream M.A."/>
            <person name="Sucgang R."/>
            <person name="Berriman M."/>
            <person name="Song J."/>
            <person name="Olsen R."/>
            <person name="Szafranski K."/>
            <person name="Xu Q."/>
            <person name="Tunggal B."/>
            <person name="Kummerfeld S."/>
            <person name="Madera M."/>
            <person name="Konfortov B.A."/>
            <person name="Rivero F."/>
            <person name="Bankier A.T."/>
            <person name="Lehmann R."/>
            <person name="Hamlin N."/>
            <person name="Davies R."/>
            <person name="Gaudet P."/>
            <person name="Fey P."/>
            <person name="Pilcher K."/>
            <person name="Chen G."/>
            <person name="Saunders D."/>
            <person name="Sodergren E.J."/>
            <person name="Davis P."/>
            <person name="Kerhornou A."/>
            <person name="Nie X."/>
            <person name="Hall N."/>
            <person name="Anjard C."/>
            <person name="Hemphill L."/>
            <person name="Bason N."/>
            <person name="Farbrother P."/>
            <person name="Desany B."/>
            <person name="Just E."/>
            <person name="Morio T."/>
            <person name="Rost R."/>
            <person name="Churcher C.M."/>
            <person name="Cooper J."/>
            <person name="Haydock S."/>
            <person name="van Driessche N."/>
            <person name="Cronin A."/>
            <person name="Goodhead I."/>
            <person name="Muzny D.M."/>
            <person name="Mourier T."/>
            <person name="Pain A."/>
            <person name="Lu M."/>
            <person name="Harper D."/>
            <person name="Lindsay R."/>
            <person name="Hauser H."/>
            <person name="James K.D."/>
            <person name="Quiles M."/>
            <person name="Madan Babu M."/>
            <person name="Saito T."/>
            <person name="Buchrieser C."/>
            <person name="Wardroper A."/>
            <person name="Felder M."/>
            <person name="Thangavelu M."/>
            <person name="Johnson D."/>
            <person name="Knights A."/>
            <person name="Loulseged H."/>
            <person name="Mungall K.L."/>
            <person name="Oliver K."/>
            <person name="Price C."/>
            <person name="Quail M.A."/>
            <person name="Urushihara H."/>
            <person name="Hernandez J."/>
            <person name="Rabbinowitsch E."/>
            <person name="Steffen D."/>
            <person name="Sanders M."/>
            <person name="Ma J."/>
            <person name="Kohara Y."/>
            <person name="Sharp S."/>
            <person name="Simmonds M.N."/>
            <person name="Spiegler S."/>
            <person name="Tivey A."/>
            <person name="Sugano S."/>
            <person name="White B."/>
            <person name="Walker D."/>
            <person name="Woodward J.R."/>
            <person name="Winckler T."/>
            <person name="Tanaka Y."/>
            <person name="Shaulsky G."/>
            <person name="Schleicher M."/>
            <person name="Weinstock G.M."/>
            <person name="Rosenthal A."/>
            <person name="Cox E.C."/>
            <person name="Chisholm R.L."/>
            <person name="Gibbs R.A."/>
            <person name="Loomis W.F."/>
            <person name="Platzer M."/>
            <person name="Kay R.R."/>
            <person name="Williams J.G."/>
            <person name="Dear P.H."/>
            <person name="Noegel A.A."/>
            <person name="Barrell B.G."/>
            <person name="Kuspa A."/>
        </authorList>
    </citation>
    <scope>NUCLEOTIDE SEQUENCE [LARGE SCALE GENOMIC DNA]</scope>
    <source>
        <strain>AX4</strain>
    </source>
</reference>
<protein>
    <recommendedName>
        <fullName>Putative uncharacterized protein DDB_G0285187</fullName>
    </recommendedName>
</protein>
<sequence length="46" mass="4920">MNFGIKPDVSSGPRKGGPFKELSDFSKTSPTPQQPRSLSGKSVMLP</sequence>
<dbReference type="EMBL" id="AAFI02000075">
    <property type="protein sequence ID" value="EAL64850.1"/>
    <property type="molecule type" value="Genomic_DNA"/>
</dbReference>
<dbReference type="RefSeq" id="XP_638360.1">
    <property type="nucleotide sequence ID" value="XM_633268.1"/>
</dbReference>
<dbReference type="PaxDb" id="44689-DDB0186387"/>
<dbReference type="EnsemblProtists" id="EAL64850">
    <property type="protein sequence ID" value="EAL64850"/>
    <property type="gene ID" value="DDB_G0285187"/>
</dbReference>
<dbReference type="GeneID" id="8624984"/>
<dbReference type="KEGG" id="ddi:DDB_G0285187"/>
<dbReference type="dictyBase" id="DDB_G0285187"/>
<dbReference type="VEuPathDB" id="AmoebaDB:DDB_G0285187"/>
<dbReference type="HOGENOM" id="CLU_3192446_0_0_1"/>
<dbReference type="InParanoid" id="Q54NK2"/>
<dbReference type="PRO" id="PR:Q54NK2"/>
<dbReference type="Proteomes" id="UP000002195">
    <property type="component" value="Chromosome 4"/>
</dbReference>